<keyword id="KW-0963">Cytoplasm</keyword>
<keyword id="KW-0903">Direct protein sequencing</keyword>
<keyword id="KW-0560">Oxidoreductase</keyword>
<feature type="chain" id="PRO_0000199733" description="Soluble hydrogenase 50 kDa subunit">
    <location>
        <begin position="1"/>
        <end position="14" status="greater than"/>
    </location>
</feature>
<feature type="non-terminal residue">
    <location>
        <position position="14"/>
    </location>
</feature>
<proteinExistence type="evidence at protein level"/>
<dbReference type="EC" id="1.12.-.-"/>
<dbReference type="PIR" id="S07768">
    <property type="entry name" value="S07768"/>
</dbReference>
<dbReference type="GO" id="GO:0005737">
    <property type="term" value="C:cytoplasm"/>
    <property type="evidence" value="ECO:0007669"/>
    <property type="project" value="UniProtKB-SubCell"/>
</dbReference>
<dbReference type="GO" id="GO:0016491">
    <property type="term" value="F:oxidoreductase activity"/>
    <property type="evidence" value="ECO:0007669"/>
    <property type="project" value="UniProtKB-KW"/>
</dbReference>
<organism>
    <name type="scientific">Anabaena cylindrica</name>
    <dbReference type="NCBI Taxonomy" id="1165"/>
    <lineage>
        <taxon>Bacteria</taxon>
        <taxon>Bacillati</taxon>
        <taxon>Cyanobacteriota</taxon>
        <taxon>Cyanophyceae</taxon>
        <taxon>Nostocales</taxon>
        <taxon>Nostocaceae</taxon>
        <taxon>Anabaena</taxon>
    </lineage>
</organism>
<protein>
    <recommendedName>
        <fullName>Soluble hydrogenase 50 kDa subunit</fullName>
        <ecNumber>1.12.-.-</ecNumber>
    </recommendedName>
</protein>
<name>DHSL_ANACY</name>
<accession>P17874</accession>
<comment type="function">
    <text>Soluble hydrogenase catalyzes both production and consumption of hydrogen from suitable artificial electron donors or acceptors. This subunit (50 kDa) is required for hydrogen production with reduced methyl-viologen.</text>
</comment>
<comment type="subunit">
    <text>Heterodimer of a large and a small subunit.</text>
</comment>
<comment type="subcellular location">
    <subcellularLocation>
        <location>Cytoplasm</location>
    </subcellularLocation>
</comment>
<reference key="1">
    <citation type="journal article" date="1990" name="Eur. J. Biochem.">
        <title>Soluble hydrogenase of Anabaena cylindrica. Cloning and sequencing of a potential gene encoding the tritium exchange subunit.</title>
        <authorList>
            <person name="Ewart G.D."/>
            <person name="Reed K.C."/>
            <person name="Smith G.D."/>
        </authorList>
    </citation>
    <scope>PROTEIN SEQUENCE</scope>
</reference>
<sequence length="14" mass="1552">XEEFDYDLVIIGAG</sequence>